<gene>
    <name evidence="1" type="primary">rplL</name>
    <name type="ordered locus">HH_0362</name>
</gene>
<protein>
    <recommendedName>
        <fullName evidence="1">Large ribosomal subunit protein bL12</fullName>
    </recommendedName>
    <alternativeName>
        <fullName evidence="2">50S ribosomal protein L7/L12</fullName>
    </alternativeName>
</protein>
<comment type="function">
    <text evidence="1">Forms part of the ribosomal stalk which helps the ribosome interact with GTP-bound translation factors. Is thus essential for accurate translation.</text>
</comment>
<comment type="subunit">
    <text evidence="1">Homodimer. Part of the ribosomal stalk of the 50S ribosomal subunit. Forms a multimeric L10(L12)X complex, where L10 forms an elongated spine to which 2 to 4 L12 dimers bind in a sequential fashion. Binds GTP-bound translation factors.</text>
</comment>
<comment type="similarity">
    <text evidence="1">Belongs to the bacterial ribosomal protein bL12 family.</text>
</comment>
<reference key="1">
    <citation type="journal article" date="2003" name="Proc. Natl. Acad. Sci. U.S.A.">
        <title>The complete genome sequence of the carcinogenic bacterium Helicobacter hepaticus.</title>
        <authorList>
            <person name="Suerbaum S."/>
            <person name="Josenhans C."/>
            <person name="Sterzenbach T."/>
            <person name="Drescher B."/>
            <person name="Brandt P."/>
            <person name="Bell M."/>
            <person name="Droege M."/>
            <person name="Fartmann B."/>
            <person name="Fischer H.-P."/>
            <person name="Ge Z."/>
            <person name="Hoerster A."/>
            <person name="Holland R."/>
            <person name="Klein K."/>
            <person name="Koenig J."/>
            <person name="Macko L."/>
            <person name="Mendz G.L."/>
            <person name="Nyakatura G."/>
            <person name="Schauer D.B."/>
            <person name="Shen Z."/>
            <person name="Weber J."/>
            <person name="Frosch M."/>
            <person name="Fox J.G."/>
        </authorList>
    </citation>
    <scope>NUCLEOTIDE SEQUENCE [LARGE SCALE GENOMIC DNA]</scope>
    <source>
        <strain>ATCC 51449 / 3B1</strain>
    </source>
</reference>
<keyword id="KW-1185">Reference proteome</keyword>
<keyword id="KW-0687">Ribonucleoprotein</keyword>
<keyword id="KW-0689">Ribosomal protein</keyword>
<accession>Q7VJ81</accession>
<organism>
    <name type="scientific">Helicobacter hepaticus (strain ATCC 51449 / 3B1)</name>
    <dbReference type="NCBI Taxonomy" id="235279"/>
    <lineage>
        <taxon>Bacteria</taxon>
        <taxon>Pseudomonadati</taxon>
        <taxon>Campylobacterota</taxon>
        <taxon>Epsilonproteobacteria</taxon>
        <taxon>Campylobacterales</taxon>
        <taxon>Helicobacteraceae</taxon>
        <taxon>Helicobacter</taxon>
    </lineage>
</organism>
<sequence>MAISKEEVLDYIGNLSVLELSELVKAFEEKFGVSAAPTVVAGAVAGGAGGGAAAEEKTDFNVVLVDAGANKINVIKAVREITGLGLKEAKDATEQTPSTLKEGVSKEDAENFKKKLEEAGAKVEIK</sequence>
<dbReference type="EMBL" id="AE017125">
    <property type="protein sequence ID" value="AAP76959.1"/>
    <property type="molecule type" value="Genomic_DNA"/>
</dbReference>
<dbReference type="RefSeq" id="WP_011115205.1">
    <property type="nucleotide sequence ID" value="NC_004917.1"/>
</dbReference>
<dbReference type="SMR" id="Q7VJ81"/>
<dbReference type="STRING" id="235279.HH_0362"/>
<dbReference type="KEGG" id="hhe:HH_0362"/>
<dbReference type="eggNOG" id="COG0222">
    <property type="taxonomic scope" value="Bacteria"/>
</dbReference>
<dbReference type="HOGENOM" id="CLU_086499_3_2_7"/>
<dbReference type="OrthoDB" id="9811748at2"/>
<dbReference type="Proteomes" id="UP000002495">
    <property type="component" value="Chromosome"/>
</dbReference>
<dbReference type="GO" id="GO:0022625">
    <property type="term" value="C:cytosolic large ribosomal subunit"/>
    <property type="evidence" value="ECO:0007669"/>
    <property type="project" value="TreeGrafter"/>
</dbReference>
<dbReference type="GO" id="GO:0003729">
    <property type="term" value="F:mRNA binding"/>
    <property type="evidence" value="ECO:0007669"/>
    <property type="project" value="TreeGrafter"/>
</dbReference>
<dbReference type="GO" id="GO:0003735">
    <property type="term" value="F:structural constituent of ribosome"/>
    <property type="evidence" value="ECO:0007669"/>
    <property type="project" value="InterPro"/>
</dbReference>
<dbReference type="GO" id="GO:0006412">
    <property type="term" value="P:translation"/>
    <property type="evidence" value="ECO:0007669"/>
    <property type="project" value="UniProtKB-UniRule"/>
</dbReference>
<dbReference type="CDD" id="cd00387">
    <property type="entry name" value="Ribosomal_L7_L12"/>
    <property type="match status" value="1"/>
</dbReference>
<dbReference type="FunFam" id="3.30.1390.10:FF:000001">
    <property type="entry name" value="50S ribosomal protein L7/L12"/>
    <property type="match status" value="1"/>
</dbReference>
<dbReference type="Gene3D" id="3.30.1390.10">
    <property type="match status" value="1"/>
</dbReference>
<dbReference type="Gene3D" id="1.20.5.710">
    <property type="entry name" value="Single helix bin"/>
    <property type="match status" value="1"/>
</dbReference>
<dbReference type="HAMAP" id="MF_00368">
    <property type="entry name" value="Ribosomal_bL12"/>
    <property type="match status" value="1"/>
</dbReference>
<dbReference type="InterPro" id="IPR000206">
    <property type="entry name" value="Ribosomal_bL12"/>
</dbReference>
<dbReference type="InterPro" id="IPR013823">
    <property type="entry name" value="Ribosomal_bL12_C"/>
</dbReference>
<dbReference type="InterPro" id="IPR014719">
    <property type="entry name" value="Ribosomal_bL12_C/ClpS-like"/>
</dbReference>
<dbReference type="InterPro" id="IPR008932">
    <property type="entry name" value="Ribosomal_bL12_oligo"/>
</dbReference>
<dbReference type="InterPro" id="IPR036235">
    <property type="entry name" value="Ribosomal_bL12_oligo_N_sf"/>
</dbReference>
<dbReference type="NCBIfam" id="TIGR00855">
    <property type="entry name" value="L12"/>
    <property type="match status" value="1"/>
</dbReference>
<dbReference type="PANTHER" id="PTHR45987">
    <property type="entry name" value="39S RIBOSOMAL PROTEIN L12"/>
    <property type="match status" value="1"/>
</dbReference>
<dbReference type="PANTHER" id="PTHR45987:SF4">
    <property type="entry name" value="LARGE RIBOSOMAL SUBUNIT PROTEIN BL12M"/>
    <property type="match status" value="1"/>
</dbReference>
<dbReference type="Pfam" id="PF00542">
    <property type="entry name" value="Ribosomal_L12"/>
    <property type="match status" value="1"/>
</dbReference>
<dbReference type="Pfam" id="PF16320">
    <property type="entry name" value="Ribosomal_L12_N"/>
    <property type="match status" value="1"/>
</dbReference>
<dbReference type="SUPFAM" id="SSF54736">
    <property type="entry name" value="ClpS-like"/>
    <property type="match status" value="1"/>
</dbReference>
<dbReference type="SUPFAM" id="SSF48300">
    <property type="entry name" value="Ribosomal protein L7/12, oligomerisation (N-terminal) domain"/>
    <property type="match status" value="1"/>
</dbReference>
<evidence type="ECO:0000255" key="1">
    <source>
        <dbReference type="HAMAP-Rule" id="MF_00368"/>
    </source>
</evidence>
<evidence type="ECO:0000305" key="2"/>
<feature type="chain" id="PRO_0000243433" description="Large ribosomal subunit protein bL12">
    <location>
        <begin position="1"/>
        <end position="126"/>
    </location>
</feature>
<name>RL7_HELHP</name>
<proteinExistence type="inferred from homology"/>